<evidence type="ECO:0000250" key="1"/>
<evidence type="ECO:0000255" key="2"/>
<evidence type="ECO:0000305" key="3"/>
<sequence>MIATIVTSVSIIFVVLGALISAFAATGLIRLRDVYSRAHAAGKAATLGAMFLLFGAFLYFIGTEGYVNMQLIIGIIFVFITGPLSSHLIMKAAYNIKTPYTKDTKIDEIKEDMKHTKL</sequence>
<name>MNHG1_STAES</name>
<gene>
    <name type="primary">mnhG1</name>
    <name type="ordered locus">SE_0640</name>
</gene>
<keyword id="KW-0050">Antiport</keyword>
<keyword id="KW-1003">Cell membrane</keyword>
<keyword id="KW-0375">Hydrogen ion transport</keyword>
<keyword id="KW-0406">Ion transport</keyword>
<keyword id="KW-0472">Membrane</keyword>
<keyword id="KW-0915">Sodium</keyword>
<keyword id="KW-0739">Sodium transport</keyword>
<keyword id="KW-0812">Transmembrane</keyword>
<keyword id="KW-1133">Transmembrane helix</keyword>
<keyword id="KW-0813">Transport</keyword>
<organism>
    <name type="scientific">Staphylococcus epidermidis (strain ATCC 12228 / FDA PCI 1200)</name>
    <dbReference type="NCBI Taxonomy" id="176280"/>
    <lineage>
        <taxon>Bacteria</taxon>
        <taxon>Bacillati</taxon>
        <taxon>Bacillota</taxon>
        <taxon>Bacilli</taxon>
        <taxon>Bacillales</taxon>
        <taxon>Staphylococcaceae</taxon>
        <taxon>Staphylococcus</taxon>
    </lineage>
</organism>
<comment type="function">
    <text evidence="1">Mnh complex is a Na(+)/H(+) antiporter involved in Na(+) excretion.</text>
</comment>
<comment type="subunit">
    <text evidence="1">May form a heterooligomeric complex that consists of seven subunits: mnhA1, mnhB1, mnhC1, mnhD1, mnhE1, mnhF1 and mnhG1.</text>
</comment>
<comment type="subcellular location">
    <subcellularLocation>
        <location evidence="3">Cell membrane</location>
        <topology evidence="3">Multi-pass membrane protein</topology>
    </subcellularLocation>
</comment>
<comment type="similarity">
    <text evidence="3">Belongs to the CPA3 antiporters (TC 2.A.63) subunit G family.</text>
</comment>
<protein>
    <recommendedName>
        <fullName>Na(+)/H(+) antiporter subunit G1</fullName>
    </recommendedName>
    <alternativeName>
        <fullName>Mnh complex subunit G1</fullName>
    </alternativeName>
</protein>
<dbReference type="EMBL" id="AE015929">
    <property type="protein sequence ID" value="AAO04237.1"/>
    <property type="molecule type" value="Genomic_DNA"/>
</dbReference>
<dbReference type="RefSeq" id="NP_764195.1">
    <property type="nucleotide sequence ID" value="NC_004461.1"/>
</dbReference>
<dbReference type="RefSeq" id="WP_001831900.1">
    <property type="nucleotide sequence ID" value="NZ_WBME01000044.1"/>
</dbReference>
<dbReference type="SMR" id="Q8CPV4"/>
<dbReference type="GeneID" id="50019213"/>
<dbReference type="KEGG" id="sep:SE_0640"/>
<dbReference type="PATRIC" id="fig|176280.10.peg.613"/>
<dbReference type="eggNOG" id="COG1320">
    <property type="taxonomic scope" value="Bacteria"/>
</dbReference>
<dbReference type="HOGENOM" id="CLU_121334_0_3_9"/>
<dbReference type="OrthoDB" id="9806575at2"/>
<dbReference type="Proteomes" id="UP000001411">
    <property type="component" value="Chromosome"/>
</dbReference>
<dbReference type="GO" id="GO:0005886">
    <property type="term" value="C:plasma membrane"/>
    <property type="evidence" value="ECO:0007669"/>
    <property type="project" value="UniProtKB-SubCell"/>
</dbReference>
<dbReference type="GO" id="GO:0015385">
    <property type="term" value="F:sodium:proton antiporter activity"/>
    <property type="evidence" value="ECO:0007669"/>
    <property type="project" value="TreeGrafter"/>
</dbReference>
<dbReference type="InterPro" id="IPR005133">
    <property type="entry name" value="PhaG_MnhG_YufB"/>
</dbReference>
<dbReference type="NCBIfam" id="TIGR01300">
    <property type="entry name" value="CPA3_mnhG_phaG"/>
    <property type="match status" value="1"/>
</dbReference>
<dbReference type="NCBIfam" id="NF009237">
    <property type="entry name" value="PRK12587.1"/>
    <property type="match status" value="1"/>
</dbReference>
<dbReference type="NCBIfam" id="NF009314">
    <property type="entry name" value="PRK12674.1-2"/>
    <property type="match status" value="1"/>
</dbReference>
<dbReference type="PANTHER" id="PTHR34703">
    <property type="entry name" value="ANTIPORTER SUBUNIT MNHG2-RELATED"/>
    <property type="match status" value="1"/>
</dbReference>
<dbReference type="PANTHER" id="PTHR34703:SF1">
    <property type="entry name" value="ANTIPORTER SUBUNIT MNHG2-RELATED"/>
    <property type="match status" value="1"/>
</dbReference>
<dbReference type="Pfam" id="PF03334">
    <property type="entry name" value="PhaG_MnhG_YufB"/>
    <property type="match status" value="1"/>
</dbReference>
<proteinExistence type="inferred from homology"/>
<accession>Q8CPV4</accession>
<reference key="1">
    <citation type="journal article" date="2003" name="Mol. Microbiol.">
        <title>Genome-based analysis of virulence genes in a non-biofilm-forming Staphylococcus epidermidis strain (ATCC 12228).</title>
        <authorList>
            <person name="Zhang Y.-Q."/>
            <person name="Ren S.-X."/>
            <person name="Li H.-L."/>
            <person name="Wang Y.-X."/>
            <person name="Fu G."/>
            <person name="Yang J."/>
            <person name="Qin Z.-Q."/>
            <person name="Miao Y.-G."/>
            <person name="Wang W.-Y."/>
            <person name="Chen R.-S."/>
            <person name="Shen Y."/>
            <person name="Chen Z."/>
            <person name="Yuan Z.-H."/>
            <person name="Zhao G.-P."/>
            <person name="Qu D."/>
            <person name="Danchin A."/>
            <person name="Wen Y.-M."/>
        </authorList>
    </citation>
    <scope>NUCLEOTIDE SEQUENCE [LARGE SCALE GENOMIC DNA]</scope>
    <source>
        <strain>ATCC 12228 / FDA PCI 1200</strain>
    </source>
</reference>
<feature type="chain" id="PRO_0000372169" description="Na(+)/H(+) antiporter subunit G1">
    <location>
        <begin position="1"/>
        <end position="118"/>
    </location>
</feature>
<feature type="transmembrane region" description="Helical" evidence="2">
    <location>
        <begin position="9"/>
        <end position="29"/>
    </location>
</feature>
<feature type="transmembrane region" description="Helical" evidence="2">
    <location>
        <begin position="47"/>
        <end position="67"/>
    </location>
</feature>
<feature type="transmembrane region" description="Helical" evidence="2">
    <location>
        <begin position="69"/>
        <end position="89"/>
    </location>
</feature>